<dbReference type="EMBL" id="MT903340">
    <property type="protein sequence ID" value="QNP12897.1"/>
    <property type="molecule type" value="Genomic_DNA"/>
</dbReference>
<dbReference type="SMR" id="A0A7H0DN14"/>
<dbReference type="Proteomes" id="UP000516359">
    <property type="component" value="Genome"/>
</dbReference>
<dbReference type="GO" id="GO:0030414">
    <property type="term" value="F:peptidase inhibitor activity"/>
    <property type="evidence" value="ECO:0007669"/>
    <property type="project" value="InterPro"/>
</dbReference>
<dbReference type="Gene3D" id="2.40.50.140">
    <property type="entry name" value="Nucleic acid-binding proteins"/>
    <property type="match status" value="1"/>
</dbReference>
<dbReference type="InterPro" id="IPR016397">
    <property type="entry name" value="K3-like_poxvir"/>
</dbReference>
<dbReference type="InterPro" id="IPR012340">
    <property type="entry name" value="NA-bd_OB-fold"/>
</dbReference>
<dbReference type="PIRSF" id="PIRSF003760">
    <property type="entry name" value="VAC_K3L_Serpin_prd"/>
    <property type="match status" value="1"/>
</dbReference>
<dbReference type="SUPFAM" id="SSF50249">
    <property type="entry name" value="Nucleic acid-binding proteins"/>
    <property type="match status" value="1"/>
</dbReference>
<name>PG041_MONPV</name>
<sequence>MLAFCYSLPNAGDVIKGRVYENDYTLYIYLFDYPHSEAILAEC</sequence>
<feature type="chain" id="PRO_0000457204" description="Truncated K3L homolog">
    <location>
        <begin position="1"/>
        <end position="43"/>
    </location>
</feature>
<organismHost>
    <name type="scientific">Cynomys gunnisoni</name>
    <name type="common">Gunnison's prairie dog</name>
    <name type="synonym">Spermophilus gunnisoni</name>
    <dbReference type="NCBI Taxonomy" id="45479"/>
</organismHost>
<organismHost>
    <name type="scientific">Cynomys leucurus</name>
    <name type="common">White-tailed prairie dog</name>
    <dbReference type="NCBI Taxonomy" id="99825"/>
</organismHost>
<organismHost>
    <name type="scientific">Cynomys ludovicianus</name>
    <name type="common">Black-tailed prairie dog</name>
    <dbReference type="NCBI Taxonomy" id="45480"/>
</organismHost>
<organismHost>
    <name type="scientific">Cynomys mexicanus</name>
    <name type="common">Mexican prairie dog</name>
    <dbReference type="NCBI Taxonomy" id="99826"/>
</organismHost>
<organismHost>
    <name type="scientific">Cynomys parvidens</name>
    <name type="common">Utah prairie dog</name>
    <dbReference type="NCBI Taxonomy" id="99827"/>
</organismHost>
<organismHost>
    <name type="scientific">Gliridae</name>
    <name type="common">dormice</name>
    <dbReference type="NCBI Taxonomy" id="30650"/>
</organismHost>
<organismHost>
    <name type="scientific">Heliosciurus ruwenzorii</name>
    <name type="common">Ruwenzori sun squirrel</name>
    <dbReference type="NCBI Taxonomy" id="226685"/>
</organismHost>
<organismHost>
    <name type="scientific">Homo sapiens</name>
    <name type="common">Human</name>
    <dbReference type="NCBI Taxonomy" id="9606"/>
</organismHost>
<organismHost>
    <name type="scientific">Mus musculus</name>
    <name type="common">Mouse</name>
    <dbReference type="NCBI Taxonomy" id="10090"/>
</organismHost>
<keyword id="KW-1185">Reference proteome</keyword>
<gene>
    <name type="primary">OPG041</name>
    <name type="ORF">MPXVgp029</name>
</gene>
<accession>A0A7H0DN14</accession>
<organism evidence="2 3">
    <name type="scientific">Monkeypox virus</name>
    <dbReference type="NCBI Taxonomy" id="10244"/>
    <lineage>
        <taxon>Viruses</taxon>
        <taxon>Varidnaviria</taxon>
        <taxon>Bamfordvirae</taxon>
        <taxon>Nucleocytoviricota</taxon>
        <taxon>Pokkesviricetes</taxon>
        <taxon>Chitovirales</taxon>
        <taxon>Poxviridae</taxon>
        <taxon>Chordopoxvirinae</taxon>
        <taxon>Orthopoxvirus</taxon>
    </lineage>
</organism>
<reference key="1">
    <citation type="journal article" date="2022" name="J. Infect. Dis.">
        <title>Exportation of Monkeypox virus from the African continent.</title>
        <authorList>
            <person name="Mauldin M.R."/>
            <person name="McCollum A.M."/>
            <person name="Nakazawa Y.J."/>
            <person name="Mandra A."/>
            <person name="Whitehouse E.R."/>
            <person name="Davidson W."/>
            <person name="Zhao H."/>
            <person name="Gao J."/>
            <person name="Li Y."/>
            <person name="Doty J."/>
            <person name="Yinka-Ogunleye A."/>
            <person name="Akinpelu A."/>
            <person name="Aruna O."/>
            <person name="Naidoo D."/>
            <person name="Lewandowski K."/>
            <person name="Afrough B."/>
            <person name="Graham V."/>
            <person name="Aarons E."/>
            <person name="Hewson R."/>
            <person name="Vipond R."/>
            <person name="Dunning J."/>
            <person name="Chand M."/>
            <person name="Brown C."/>
            <person name="Cohen-Gihon I."/>
            <person name="Erez N."/>
            <person name="Shifman O."/>
            <person name="Israeli O."/>
            <person name="Sharon M."/>
            <person name="Schwartz E."/>
            <person name="Beth-Din A."/>
            <person name="Zvi A."/>
            <person name="Mak T.M."/>
            <person name="Ng Y.K."/>
            <person name="Cui L."/>
            <person name="Lin R.T.P."/>
            <person name="Olson V.A."/>
            <person name="Brooks T."/>
            <person name="Paran N."/>
            <person name="Ihekweazu C."/>
            <person name="Reynolds M.G."/>
        </authorList>
    </citation>
    <scope>NUCLEOTIDE SEQUENCE [LARGE SCALE GENOMIC DNA]</scope>
    <source>
        <strain>MPXV-M5312_HM12_Rivers</strain>
    </source>
</reference>
<comment type="similarity">
    <text evidence="1">Belongs to the orthopoxvirus OPG041 family.</text>
</comment>
<protein>
    <recommendedName>
        <fullName>Truncated K3L homolog</fullName>
    </recommendedName>
</protein>
<proteinExistence type="inferred from homology"/>
<evidence type="ECO:0000305" key="1"/>
<evidence type="ECO:0000312" key="2">
    <source>
        <dbReference type="EMBL" id="QNP12897.1"/>
    </source>
</evidence>
<evidence type="ECO:0000312" key="3">
    <source>
        <dbReference type="Proteomes" id="UP000516359"/>
    </source>
</evidence>